<comment type="function">
    <text evidence="5">ATPase component of the INO80 complex which remodels chromatin by shifting nucleosomes and is involved in DNA repair.</text>
</comment>
<comment type="catalytic activity">
    <reaction evidence="1">
        <text>ATP + H2O = ADP + phosphate + H(+)</text>
        <dbReference type="Rhea" id="RHEA:13065"/>
        <dbReference type="ChEBI" id="CHEBI:15377"/>
        <dbReference type="ChEBI" id="CHEBI:15378"/>
        <dbReference type="ChEBI" id="CHEBI:30616"/>
        <dbReference type="ChEBI" id="CHEBI:43474"/>
        <dbReference type="ChEBI" id="CHEBI:456216"/>
    </reaction>
</comment>
<comment type="subunit">
    <text evidence="5">Component of the INO80 chromatin-remodeling complex.</text>
</comment>
<comment type="subcellular location">
    <subcellularLocation>
        <location evidence="5">Nucleus</location>
    </subcellularLocation>
</comment>
<comment type="domain">
    <text evidence="2">The DBINO region is involved in binding to DNA.</text>
</comment>
<comment type="similarity">
    <text evidence="7">Belongs to the SNF2/RAD54 helicase family.</text>
</comment>
<accession>Q6BGY8</accession>
<accession>B5RUY3</accession>
<organism>
    <name type="scientific">Debaryomyces hansenii (strain ATCC 36239 / CBS 767 / BCRC 21394 / JCM 1990 / NBRC 0083 / IGC 2968)</name>
    <name type="common">Yeast</name>
    <name type="synonym">Torulaspora hansenii</name>
    <dbReference type="NCBI Taxonomy" id="284592"/>
    <lineage>
        <taxon>Eukaryota</taxon>
        <taxon>Fungi</taxon>
        <taxon>Dikarya</taxon>
        <taxon>Ascomycota</taxon>
        <taxon>Saccharomycotina</taxon>
        <taxon>Pichiomycetes</taxon>
        <taxon>Debaryomycetaceae</taxon>
        <taxon>Debaryomyces</taxon>
    </lineage>
</organism>
<proteinExistence type="inferred from homology"/>
<keyword id="KW-0010">Activator</keyword>
<keyword id="KW-0067">ATP-binding</keyword>
<keyword id="KW-0175">Coiled coil</keyword>
<keyword id="KW-0227">DNA damage</keyword>
<keyword id="KW-0234">DNA repair</keyword>
<keyword id="KW-0238">DNA-binding</keyword>
<keyword id="KW-0378">Hydrolase</keyword>
<keyword id="KW-0547">Nucleotide-binding</keyword>
<keyword id="KW-0539">Nucleus</keyword>
<keyword id="KW-1185">Reference proteome</keyword>
<keyword id="KW-0804">Transcription</keyword>
<keyword id="KW-0805">Transcription regulation</keyword>
<feature type="chain" id="PRO_0000074323" description="Chromatin-remodeling ATPase INO80">
    <location>
        <begin position="1"/>
        <end position="1364"/>
    </location>
</feature>
<feature type="domain" description="DBINO" evidence="5">
    <location>
        <begin position="335"/>
        <end position="460"/>
    </location>
</feature>
<feature type="domain" description="Helicase ATP-binding" evidence="3">
    <location>
        <begin position="579"/>
        <end position="751"/>
    </location>
</feature>
<feature type="domain" description="Helicase C-terminal" evidence="4">
    <location>
        <begin position="1146"/>
        <end position="1302"/>
    </location>
</feature>
<feature type="region of interest" description="Disordered" evidence="6">
    <location>
        <begin position="1"/>
        <end position="84"/>
    </location>
</feature>
<feature type="region of interest" description="Disordered" evidence="6">
    <location>
        <begin position="213"/>
        <end position="293"/>
    </location>
</feature>
<feature type="region of interest" description="Disordered" evidence="6">
    <location>
        <begin position="1321"/>
        <end position="1364"/>
    </location>
</feature>
<feature type="short sequence motif" description="DEAQ box">
    <location>
        <begin position="702"/>
        <end position="705"/>
    </location>
</feature>
<feature type="compositionally biased region" description="Polar residues" evidence="6">
    <location>
        <begin position="1"/>
        <end position="18"/>
    </location>
</feature>
<feature type="compositionally biased region" description="Polar residues" evidence="6">
    <location>
        <begin position="66"/>
        <end position="84"/>
    </location>
</feature>
<feature type="compositionally biased region" description="Basic and acidic residues" evidence="6">
    <location>
        <begin position="213"/>
        <end position="227"/>
    </location>
</feature>
<feature type="compositionally biased region" description="Basic residues" evidence="6">
    <location>
        <begin position="243"/>
        <end position="255"/>
    </location>
</feature>
<feature type="compositionally biased region" description="Basic and acidic residues" evidence="6">
    <location>
        <begin position="1330"/>
        <end position="1353"/>
    </location>
</feature>
<feature type="binding site" evidence="3">
    <location>
        <begin position="592"/>
        <end position="599"/>
    </location>
    <ligand>
        <name>ATP</name>
        <dbReference type="ChEBI" id="CHEBI:30616"/>
    </ligand>
</feature>
<evidence type="ECO:0000250" key="1">
    <source>
        <dbReference type="UniProtKB" id="P53115"/>
    </source>
</evidence>
<evidence type="ECO:0000250" key="2">
    <source>
        <dbReference type="UniProtKB" id="Q9ULG1"/>
    </source>
</evidence>
<evidence type="ECO:0000255" key="3">
    <source>
        <dbReference type="PROSITE-ProRule" id="PRU00541"/>
    </source>
</evidence>
<evidence type="ECO:0000255" key="4">
    <source>
        <dbReference type="PROSITE-ProRule" id="PRU00542"/>
    </source>
</evidence>
<evidence type="ECO:0000255" key="5">
    <source>
        <dbReference type="PROSITE-ProRule" id="PRU00746"/>
    </source>
</evidence>
<evidence type="ECO:0000256" key="6">
    <source>
        <dbReference type="SAM" id="MobiDB-lite"/>
    </source>
</evidence>
<evidence type="ECO:0000305" key="7"/>
<gene>
    <name type="primary">INO80</name>
    <name type="ordered locus">DEHA2G22682g</name>
</gene>
<reference key="1">
    <citation type="journal article" date="2004" name="Nature">
        <title>Genome evolution in yeasts.</title>
        <authorList>
            <person name="Dujon B."/>
            <person name="Sherman D."/>
            <person name="Fischer G."/>
            <person name="Durrens P."/>
            <person name="Casaregola S."/>
            <person name="Lafontaine I."/>
            <person name="de Montigny J."/>
            <person name="Marck C."/>
            <person name="Neuveglise C."/>
            <person name="Talla E."/>
            <person name="Goffard N."/>
            <person name="Frangeul L."/>
            <person name="Aigle M."/>
            <person name="Anthouard V."/>
            <person name="Babour A."/>
            <person name="Barbe V."/>
            <person name="Barnay S."/>
            <person name="Blanchin S."/>
            <person name="Beckerich J.-M."/>
            <person name="Beyne E."/>
            <person name="Bleykasten C."/>
            <person name="Boisrame A."/>
            <person name="Boyer J."/>
            <person name="Cattolico L."/>
            <person name="Confanioleri F."/>
            <person name="de Daruvar A."/>
            <person name="Despons L."/>
            <person name="Fabre E."/>
            <person name="Fairhead C."/>
            <person name="Ferry-Dumazet H."/>
            <person name="Groppi A."/>
            <person name="Hantraye F."/>
            <person name="Hennequin C."/>
            <person name="Jauniaux N."/>
            <person name="Joyet P."/>
            <person name="Kachouri R."/>
            <person name="Kerrest A."/>
            <person name="Koszul R."/>
            <person name="Lemaire M."/>
            <person name="Lesur I."/>
            <person name="Ma L."/>
            <person name="Muller H."/>
            <person name="Nicaud J.-M."/>
            <person name="Nikolski M."/>
            <person name="Oztas S."/>
            <person name="Ozier-Kalogeropoulos O."/>
            <person name="Pellenz S."/>
            <person name="Potier S."/>
            <person name="Richard G.-F."/>
            <person name="Straub M.-L."/>
            <person name="Suleau A."/>
            <person name="Swennen D."/>
            <person name="Tekaia F."/>
            <person name="Wesolowski-Louvel M."/>
            <person name="Westhof E."/>
            <person name="Wirth B."/>
            <person name="Zeniou-Meyer M."/>
            <person name="Zivanovic Y."/>
            <person name="Bolotin-Fukuhara M."/>
            <person name="Thierry A."/>
            <person name="Bouchier C."/>
            <person name="Caudron B."/>
            <person name="Scarpelli C."/>
            <person name="Gaillardin C."/>
            <person name="Weissenbach J."/>
            <person name="Wincker P."/>
            <person name="Souciet J.-L."/>
        </authorList>
    </citation>
    <scope>NUCLEOTIDE SEQUENCE [LARGE SCALE GENOMIC DNA]</scope>
    <source>
        <strain>ATCC 36239 / CBS 767 / BCRC 21394 / JCM 1990 / NBRC 0083 / IGC 2968</strain>
    </source>
</reference>
<dbReference type="EC" id="3.6.4.-" evidence="1"/>
<dbReference type="EMBL" id="CR382139">
    <property type="protein sequence ID" value="CAR66027.1"/>
    <property type="molecule type" value="Genomic_DNA"/>
</dbReference>
<dbReference type="RefSeq" id="XP_002770708.1">
    <property type="nucleotide sequence ID" value="XM_002770662.1"/>
</dbReference>
<dbReference type="SMR" id="Q6BGY8"/>
<dbReference type="FunCoup" id="Q6BGY8">
    <property type="interactions" value="1168"/>
</dbReference>
<dbReference type="STRING" id="284592.Q6BGY8"/>
<dbReference type="GeneID" id="8999286"/>
<dbReference type="KEGG" id="dha:DEHA2G22682g"/>
<dbReference type="VEuPathDB" id="FungiDB:DEHA2G22682g"/>
<dbReference type="eggNOG" id="KOG0388">
    <property type="taxonomic scope" value="Eukaryota"/>
</dbReference>
<dbReference type="HOGENOM" id="CLU_000315_26_2_1"/>
<dbReference type="InParanoid" id="Q6BGY8"/>
<dbReference type="OMA" id="FWKKNER"/>
<dbReference type="OrthoDB" id="372624at2759"/>
<dbReference type="Proteomes" id="UP000000599">
    <property type="component" value="Chromosome G"/>
</dbReference>
<dbReference type="GO" id="GO:0000775">
    <property type="term" value="C:chromosome, centromeric region"/>
    <property type="evidence" value="ECO:0007669"/>
    <property type="project" value="EnsemblFungi"/>
</dbReference>
<dbReference type="GO" id="GO:0000781">
    <property type="term" value="C:chromosome, telomeric region"/>
    <property type="evidence" value="ECO:0007669"/>
    <property type="project" value="GOC"/>
</dbReference>
<dbReference type="GO" id="GO:0031011">
    <property type="term" value="C:Ino80 complex"/>
    <property type="evidence" value="ECO:0007669"/>
    <property type="project" value="EnsemblFungi"/>
</dbReference>
<dbReference type="GO" id="GO:0005524">
    <property type="term" value="F:ATP binding"/>
    <property type="evidence" value="ECO:0007669"/>
    <property type="project" value="UniProtKB-KW"/>
</dbReference>
<dbReference type="GO" id="GO:0016887">
    <property type="term" value="F:ATP hydrolysis activity"/>
    <property type="evidence" value="ECO:0007669"/>
    <property type="project" value="EnsemblFungi"/>
</dbReference>
<dbReference type="GO" id="GO:0140658">
    <property type="term" value="F:ATP-dependent chromatin remodeler activity"/>
    <property type="evidence" value="ECO:0007669"/>
    <property type="project" value="InterPro"/>
</dbReference>
<dbReference type="GO" id="GO:0003677">
    <property type="term" value="F:DNA binding"/>
    <property type="evidence" value="ECO:0007669"/>
    <property type="project" value="UniProtKB-KW"/>
</dbReference>
<dbReference type="GO" id="GO:0042393">
    <property type="term" value="F:histone binding"/>
    <property type="evidence" value="ECO:0007669"/>
    <property type="project" value="TreeGrafter"/>
</dbReference>
<dbReference type="GO" id="GO:0034080">
    <property type="term" value="P:CENP-A containing chromatin assembly"/>
    <property type="evidence" value="ECO:0007669"/>
    <property type="project" value="EnsemblFungi"/>
</dbReference>
<dbReference type="GO" id="GO:0006281">
    <property type="term" value="P:DNA repair"/>
    <property type="evidence" value="ECO:0007669"/>
    <property type="project" value="UniProtKB-KW"/>
</dbReference>
<dbReference type="GO" id="GO:0045944">
    <property type="term" value="P:positive regulation of transcription by RNA polymerase II"/>
    <property type="evidence" value="ECO:0007669"/>
    <property type="project" value="EnsemblFungi"/>
</dbReference>
<dbReference type="GO" id="GO:0032006">
    <property type="term" value="P:regulation of TOR signaling"/>
    <property type="evidence" value="ECO:0007669"/>
    <property type="project" value="EnsemblFungi"/>
</dbReference>
<dbReference type="GO" id="GO:0031509">
    <property type="term" value="P:subtelomeric heterochromatin formation"/>
    <property type="evidence" value="ECO:0007669"/>
    <property type="project" value="EnsemblFungi"/>
</dbReference>
<dbReference type="GO" id="GO:0000722">
    <property type="term" value="P:telomere maintenance via recombination"/>
    <property type="evidence" value="ECO:0007669"/>
    <property type="project" value="EnsemblFungi"/>
</dbReference>
<dbReference type="GO" id="GO:0006366">
    <property type="term" value="P:transcription by RNA polymerase II"/>
    <property type="evidence" value="ECO:0007669"/>
    <property type="project" value="EnsemblFungi"/>
</dbReference>
<dbReference type="CDD" id="cd18002">
    <property type="entry name" value="DEXQc_INO80"/>
    <property type="match status" value="1"/>
</dbReference>
<dbReference type="CDD" id="cd18793">
    <property type="entry name" value="SF2_C_SNF"/>
    <property type="match status" value="1"/>
</dbReference>
<dbReference type="FunFam" id="3.40.50.10810:FF:000022">
    <property type="entry name" value="Blast:Putative DNA helicase Ino80"/>
    <property type="match status" value="1"/>
</dbReference>
<dbReference type="FunFam" id="3.40.50.300:FF:001269">
    <property type="entry name" value="SNF2 family helicase/ATPase"/>
    <property type="match status" value="1"/>
</dbReference>
<dbReference type="Gene3D" id="3.40.50.300">
    <property type="entry name" value="P-loop containing nucleotide triphosphate hydrolases"/>
    <property type="match status" value="2"/>
</dbReference>
<dbReference type="Gene3D" id="3.40.50.10810">
    <property type="entry name" value="Tandem AAA-ATPase domain"/>
    <property type="match status" value="1"/>
</dbReference>
<dbReference type="InterPro" id="IPR020838">
    <property type="entry name" value="DBINO"/>
</dbReference>
<dbReference type="InterPro" id="IPR031047">
    <property type="entry name" value="DEXQc_INO80"/>
</dbReference>
<dbReference type="InterPro" id="IPR014001">
    <property type="entry name" value="Helicase_ATP-bd"/>
</dbReference>
<dbReference type="InterPro" id="IPR001650">
    <property type="entry name" value="Helicase_C-like"/>
</dbReference>
<dbReference type="InterPro" id="IPR050520">
    <property type="entry name" value="INO80/SWR1_helicase"/>
</dbReference>
<dbReference type="InterPro" id="IPR027417">
    <property type="entry name" value="P-loop_NTPase"/>
</dbReference>
<dbReference type="InterPro" id="IPR038718">
    <property type="entry name" value="SNF2-like_sf"/>
</dbReference>
<dbReference type="InterPro" id="IPR049730">
    <property type="entry name" value="SNF2/RAD54-like_C"/>
</dbReference>
<dbReference type="InterPro" id="IPR000330">
    <property type="entry name" value="SNF2_N"/>
</dbReference>
<dbReference type="PANTHER" id="PTHR45685:SF2">
    <property type="entry name" value="CHROMATIN-REMODELING ATPASE INO80"/>
    <property type="match status" value="1"/>
</dbReference>
<dbReference type="PANTHER" id="PTHR45685">
    <property type="entry name" value="HELICASE SRCAP-RELATED"/>
    <property type="match status" value="1"/>
</dbReference>
<dbReference type="Pfam" id="PF13892">
    <property type="entry name" value="DBINO"/>
    <property type="match status" value="1"/>
</dbReference>
<dbReference type="Pfam" id="PF00271">
    <property type="entry name" value="Helicase_C"/>
    <property type="match status" value="1"/>
</dbReference>
<dbReference type="Pfam" id="PF00176">
    <property type="entry name" value="SNF2-rel_dom"/>
    <property type="match status" value="1"/>
</dbReference>
<dbReference type="SMART" id="SM00487">
    <property type="entry name" value="DEXDc"/>
    <property type="match status" value="1"/>
</dbReference>
<dbReference type="SMART" id="SM00490">
    <property type="entry name" value="HELICc"/>
    <property type="match status" value="1"/>
</dbReference>
<dbReference type="SUPFAM" id="SSF52540">
    <property type="entry name" value="P-loop containing nucleoside triphosphate hydrolases"/>
    <property type="match status" value="2"/>
</dbReference>
<dbReference type="PROSITE" id="PS51413">
    <property type="entry name" value="DBINO"/>
    <property type="match status" value="1"/>
</dbReference>
<dbReference type="PROSITE" id="PS51192">
    <property type="entry name" value="HELICASE_ATP_BIND_1"/>
    <property type="match status" value="1"/>
</dbReference>
<dbReference type="PROSITE" id="PS51194">
    <property type="entry name" value="HELICASE_CTER"/>
    <property type="match status" value="1"/>
</dbReference>
<protein>
    <recommendedName>
        <fullName evidence="1">Chromatin-remodeling ATPase INO80</fullName>
        <ecNumber evidence="1">3.6.4.-</ecNumber>
    </recommendedName>
</protein>
<sequence>MNISSMLSNDSNTASQDVGGNFDDSQRNNDKGGSQDANSKKMGTGEAEDHANGNASVEGNGIANHGSATNGNTKGTDDSSNVNIVESIIPKPIRPTRSSIESDEEDVGKNYNSIISNDSEHISQRYLENFEDKVNAINKIDQVLIKGNNMRVLNQEEENLNILIRNSGEIAENYIDRVVTEDISSKANILNGKDSVGKEFKWGSTRDMKKRELELEVDNASKADTAAKKGGNKSKQGATKSTPAKKAKAKPKRKPSATDDTSEESQLGKKRKTRAGSVSGASQNDEKSANGKVKLKLTLKDQAEEDSASADAASKVTTKEQKIITKQYDNTFVSIWKDLSRKDGPKVSRLMQQSTQAKMINLKKTSILAAREAKRWQLKNNRNQKDLTTKARRAMREMFNFWKRNERIERELRKKHEKEILDKAKKEEEERESKRQSRKLNFLITQTELYSHFIGKKIKTDEFEGTDSDPNANFKSANHHYDKYSNIDGEGKDFNSIDFDNEDEESLNKAAAVNAQIALEAAKTKAQAFDNDPLKNPDTNGEEMNFQNPTLLGDINISQPDLLKCTLKEYQVKGLNWLANLYEQGINGILADEMGLGKTVQSISVLAYLAETHNIWGPFLVVTPASTLHNWQQEISRFVPEFKVIPYWGNAKDRKVLRKFWDRKNFRYGKDAPFHVLVTSYQLVVADAAYFQKMKWQYMILDEAQAIKSSQSSRWKSLLSFSCRNRLLLTGTPIQNSMQELWALLHFIMPSLFDSHDEFSDWFSKDIESHAQSNTELNEQQLRRLHVILKPFMLRRIKKNVQSELGDKLEIDVFCDLTHRQKKYYQMLTSQISIMDLLDSANNSSDDSAQSLMNLVMQFRKVCNHPDLFERADVKSSFAFGRFAETSSFLRETNELEMSYSTENLIKYNMPRIVYEEILQPTFDNDVGSRKKINNMFNIYHPSNIANDELENFSWLRFVDQSPQEMNNLSKQNIIERAINNREYSDINYERINRLKYTYDEDNESFLPNSKLLLINELQNNHALISNSTYLKELYSIKKKVYEDMVINNMKPAAEPLVKAPPVAVVCDNISFVHDLQDSLFDPKIRSSLMPLPFNRELELLKSSIPITEYPKSNMLPNAINKFIDYSNIRMPSMNRFITESGKLSKLDELLVDLRQNDHRVLIYFQMTKMMDLMEEYLTYRQHKYIRLDGSSKLDDRRDLVHDWQTKPEIFVFLLSTRAGGLGINLTAADTVIFYDSDWNPTIDSQAMDRAHRLGQTRQVTVYRLLTRGTIEERMRDRAKQKEQVQQVVMEGKSAIANKEESGNKKKDVAFLLLGNDDSSAAALNDDSEEKQNLQDSKKSQAKNLEDMYHEGEGEFSGNVTPSL</sequence>
<name>INO80_DEBHA</name>